<protein>
    <recommendedName>
        <fullName>Ubiquitin-conjugating enzyme E2 6</fullName>
        <ecNumber>2.3.2.23</ecNumber>
    </recommendedName>
    <alternativeName>
        <fullName>E2 ubiquitin-conjugating enzyme 6</fullName>
    </alternativeName>
    <alternativeName>
        <fullName>Ubiquitin carrier protein 6</fullName>
    </alternativeName>
    <alternativeName>
        <fullName>Ubiquitin-protein ligase 6</fullName>
    </alternativeName>
</protein>
<evidence type="ECO:0000250" key="1">
    <source>
        <dbReference type="UniProtKB" id="Q5VVX9"/>
    </source>
</evidence>
<evidence type="ECO:0000255" key="2"/>
<evidence type="ECO:0000255" key="3">
    <source>
        <dbReference type="PROSITE-ProRule" id="PRU00388"/>
    </source>
</evidence>
<evidence type="ECO:0000305" key="4"/>
<name>UBC6_SCHPO</name>
<dbReference type="EC" id="2.3.2.23"/>
<dbReference type="EMBL" id="CU329670">
    <property type="protein sequence ID" value="CAA15718.1"/>
    <property type="molecule type" value="Genomic_DNA"/>
</dbReference>
<dbReference type="EMBL" id="D89248">
    <property type="protein sequence ID" value="BAA13909.1"/>
    <property type="molecule type" value="mRNA"/>
</dbReference>
<dbReference type="PIR" id="T37499">
    <property type="entry name" value="T37499"/>
</dbReference>
<dbReference type="PIR" id="T43159">
    <property type="entry name" value="T43159"/>
</dbReference>
<dbReference type="RefSeq" id="NP_593256.1">
    <property type="nucleotide sequence ID" value="NM_001018653.2"/>
</dbReference>
<dbReference type="SMR" id="O42646"/>
<dbReference type="BioGRID" id="278138">
    <property type="interactions" value="51"/>
</dbReference>
<dbReference type="FunCoup" id="O42646">
    <property type="interactions" value="866"/>
</dbReference>
<dbReference type="STRING" id="284812.O42646"/>
<dbReference type="PaxDb" id="4896-SPAC10F6.05c.1"/>
<dbReference type="EnsemblFungi" id="SPAC10F6.05c.1">
    <property type="protein sequence ID" value="SPAC10F6.05c.1:pep"/>
    <property type="gene ID" value="SPAC10F6.05c"/>
</dbReference>
<dbReference type="GeneID" id="2541642"/>
<dbReference type="KEGG" id="spo:2541642"/>
<dbReference type="PomBase" id="SPAC10F6.05c">
    <property type="gene designation" value="ubc6"/>
</dbReference>
<dbReference type="VEuPathDB" id="FungiDB:SPAC10F6.05c"/>
<dbReference type="eggNOG" id="KOG0894">
    <property type="taxonomic scope" value="Eukaryota"/>
</dbReference>
<dbReference type="HOGENOM" id="CLU_041481_1_0_1"/>
<dbReference type="InParanoid" id="O42646"/>
<dbReference type="OMA" id="GWSVATI"/>
<dbReference type="PhylomeDB" id="O42646"/>
<dbReference type="Reactome" id="R-SPO-9609523">
    <property type="pathway name" value="Insertion of tail-anchored proteins into the endoplasmic reticulum membrane"/>
</dbReference>
<dbReference type="Reactome" id="R-SPO-983168">
    <property type="pathway name" value="Antigen processing: Ubiquitination &amp; Proteasome degradation"/>
</dbReference>
<dbReference type="UniPathway" id="UPA00143"/>
<dbReference type="PRO" id="PR:O42646"/>
<dbReference type="Proteomes" id="UP000002485">
    <property type="component" value="Chromosome I"/>
</dbReference>
<dbReference type="GO" id="GO:0005783">
    <property type="term" value="C:endoplasmic reticulum"/>
    <property type="evidence" value="ECO:0000318"/>
    <property type="project" value="GO_Central"/>
</dbReference>
<dbReference type="GO" id="GO:0005789">
    <property type="term" value="C:endoplasmic reticulum membrane"/>
    <property type="evidence" value="ECO:0000266"/>
    <property type="project" value="PomBase"/>
</dbReference>
<dbReference type="GO" id="GO:0005634">
    <property type="term" value="C:nucleus"/>
    <property type="evidence" value="ECO:0000318"/>
    <property type="project" value="GO_Central"/>
</dbReference>
<dbReference type="GO" id="GO:0005524">
    <property type="term" value="F:ATP binding"/>
    <property type="evidence" value="ECO:0007669"/>
    <property type="project" value="UniProtKB-KW"/>
</dbReference>
<dbReference type="GO" id="GO:0061631">
    <property type="term" value="F:ubiquitin conjugating enzyme activity"/>
    <property type="evidence" value="ECO:0000318"/>
    <property type="project" value="GO_Central"/>
</dbReference>
<dbReference type="GO" id="GO:0036503">
    <property type="term" value="P:ERAD pathway"/>
    <property type="evidence" value="ECO:0000318"/>
    <property type="project" value="GO_Central"/>
</dbReference>
<dbReference type="GO" id="GO:0180027">
    <property type="term" value="P:inner nuclear membrane-associated protein degradation pathway"/>
    <property type="evidence" value="ECO:0000315"/>
    <property type="project" value="PomBase"/>
</dbReference>
<dbReference type="GO" id="GO:0000209">
    <property type="term" value="P:protein polyubiquitination"/>
    <property type="evidence" value="ECO:0000318"/>
    <property type="project" value="GO_Central"/>
</dbReference>
<dbReference type="CDD" id="cd23799">
    <property type="entry name" value="UBCc_UBE2J"/>
    <property type="match status" value="1"/>
</dbReference>
<dbReference type="FunFam" id="3.10.110.10:FF:000023">
    <property type="entry name" value="Ubiquitin-conjugating enzyme E2 J2"/>
    <property type="match status" value="1"/>
</dbReference>
<dbReference type="Gene3D" id="3.10.110.10">
    <property type="entry name" value="Ubiquitin Conjugating Enzyme"/>
    <property type="match status" value="1"/>
</dbReference>
<dbReference type="InterPro" id="IPR050113">
    <property type="entry name" value="Ub_conjugating_enzyme"/>
</dbReference>
<dbReference type="InterPro" id="IPR000608">
    <property type="entry name" value="UBQ-conjugat_E2_core"/>
</dbReference>
<dbReference type="InterPro" id="IPR016135">
    <property type="entry name" value="UBQ-conjugating_enzyme/RWD"/>
</dbReference>
<dbReference type="PANTHER" id="PTHR24067">
    <property type="entry name" value="UBIQUITIN-CONJUGATING ENZYME E2"/>
    <property type="match status" value="1"/>
</dbReference>
<dbReference type="Pfam" id="PF00179">
    <property type="entry name" value="UQ_con"/>
    <property type="match status" value="1"/>
</dbReference>
<dbReference type="SMART" id="SM00212">
    <property type="entry name" value="UBCc"/>
    <property type="match status" value="1"/>
</dbReference>
<dbReference type="SUPFAM" id="SSF54495">
    <property type="entry name" value="UBC-like"/>
    <property type="match status" value="1"/>
</dbReference>
<dbReference type="PROSITE" id="PS50127">
    <property type="entry name" value="UBC_2"/>
    <property type="match status" value="1"/>
</dbReference>
<reference key="1">
    <citation type="journal article" date="2002" name="Nature">
        <title>The genome sequence of Schizosaccharomyces pombe.</title>
        <authorList>
            <person name="Wood V."/>
            <person name="Gwilliam R."/>
            <person name="Rajandream M.A."/>
            <person name="Lyne M.H."/>
            <person name="Lyne R."/>
            <person name="Stewart A."/>
            <person name="Sgouros J.G."/>
            <person name="Peat N."/>
            <person name="Hayles J."/>
            <person name="Baker S.G."/>
            <person name="Basham D."/>
            <person name="Bowman S."/>
            <person name="Brooks K."/>
            <person name="Brown D."/>
            <person name="Brown S."/>
            <person name="Chillingworth T."/>
            <person name="Churcher C.M."/>
            <person name="Collins M."/>
            <person name="Connor R."/>
            <person name="Cronin A."/>
            <person name="Davis P."/>
            <person name="Feltwell T."/>
            <person name="Fraser A."/>
            <person name="Gentles S."/>
            <person name="Goble A."/>
            <person name="Hamlin N."/>
            <person name="Harris D.E."/>
            <person name="Hidalgo J."/>
            <person name="Hodgson G."/>
            <person name="Holroyd S."/>
            <person name="Hornsby T."/>
            <person name="Howarth S."/>
            <person name="Huckle E.J."/>
            <person name="Hunt S."/>
            <person name="Jagels K."/>
            <person name="James K.D."/>
            <person name="Jones L."/>
            <person name="Jones M."/>
            <person name="Leather S."/>
            <person name="McDonald S."/>
            <person name="McLean J."/>
            <person name="Mooney P."/>
            <person name="Moule S."/>
            <person name="Mungall K.L."/>
            <person name="Murphy L.D."/>
            <person name="Niblett D."/>
            <person name="Odell C."/>
            <person name="Oliver K."/>
            <person name="O'Neil S."/>
            <person name="Pearson D."/>
            <person name="Quail M.A."/>
            <person name="Rabbinowitsch E."/>
            <person name="Rutherford K.M."/>
            <person name="Rutter S."/>
            <person name="Saunders D."/>
            <person name="Seeger K."/>
            <person name="Sharp S."/>
            <person name="Skelton J."/>
            <person name="Simmonds M.N."/>
            <person name="Squares R."/>
            <person name="Squares S."/>
            <person name="Stevens K."/>
            <person name="Taylor K."/>
            <person name="Taylor R.G."/>
            <person name="Tivey A."/>
            <person name="Walsh S.V."/>
            <person name="Warren T."/>
            <person name="Whitehead S."/>
            <person name="Woodward J.R."/>
            <person name="Volckaert G."/>
            <person name="Aert R."/>
            <person name="Robben J."/>
            <person name="Grymonprez B."/>
            <person name="Weltjens I."/>
            <person name="Vanstreels E."/>
            <person name="Rieger M."/>
            <person name="Schaefer M."/>
            <person name="Mueller-Auer S."/>
            <person name="Gabel C."/>
            <person name="Fuchs M."/>
            <person name="Duesterhoeft A."/>
            <person name="Fritzc C."/>
            <person name="Holzer E."/>
            <person name="Moestl D."/>
            <person name="Hilbert H."/>
            <person name="Borzym K."/>
            <person name="Langer I."/>
            <person name="Beck A."/>
            <person name="Lehrach H."/>
            <person name="Reinhardt R."/>
            <person name="Pohl T.M."/>
            <person name="Eger P."/>
            <person name="Zimmermann W."/>
            <person name="Wedler H."/>
            <person name="Wambutt R."/>
            <person name="Purnelle B."/>
            <person name="Goffeau A."/>
            <person name="Cadieu E."/>
            <person name="Dreano S."/>
            <person name="Gloux S."/>
            <person name="Lelaure V."/>
            <person name="Mottier S."/>
            <person name="Galibert F."/>
            <person name="Aves S.J."/>
            <person name="Xiang Z."/>
            <person name="Hunt C."/>
            <person name="Moore K."/>
            <person name="Hurst S.M."/>
            <person name="Lucas M."/>
            <person name="Rochet M."/>
            <person name="Gaillardin C."/>
            <person name="Tallada V.A."/>
            <person name="Garzon A."/>
            <person name="Thode G."/>
            <person name="Daga R.R."/>
            <person name="Cruzado L."/>
            <person name="Jimenez J."/>
            <person name="Sanchez M."/>
            <person name="del Rey F."/>
            <person name="Benito J."/>
            <person name="Dominguez A."/>
            <person name="Revuelta J.L."/>
            <person name="Moreno S."/>
            <person name="Armstrong J."/>
            <person name="Forsburg S.L."/>
            <person name="Cerutti L."/>
            <person name="Lowe T."/>
            <person name="McCombie W.R."/>
            <person name="Paulsen I."/>
            <person name="Potashkin J."/>
            <person name="Shpakovski G.V."/>
            <person name="Ussery D."/>
            <person name="Barrell B.G."/>
            <person name="Nurse P."/>
        </authorList>
    </citation>
    <scope>NUCLEOTIDE SEQUENCE [LARGE SCALE GENOMIC DNA]</scope>
    <source>
        <strain>972 / ATCC 24843</strain>
    </source>
</reference>
<reference key="2">
    <citation type="journal article" date="1997" name="DNA Res.">
        <title>Identification of open reading frames in Schizosaccharomyces pombe cDNAs.</title>
        <authorList>
            <person name="Yoshioka S."/>
            <person name="Kato K."/>
            <person name="Nakai K."/>
            <person name="Okayama H."/>
            <person name="Nojima H."/>
        </authorList>
    </citation>
    <scope>NUCLEOTIDE SEQUENCE [LARGE SCALE MRNA] OF 7-227</scope>
    <source>
        <strain>PR745</strain>
    </source>
</reference>
<comment type="function">
    <text evidence="3">Catalyzes the covalent attachment of ubiquitin to other proteins. Functions in degradation of misfolded or regulated proteins localized in the endoplasmic reticulum (ER) lumen or membrane via the ubiquitin-proteasome system. Cognate E2 conjugating enzyme for the doa10 ubiquitin ligase complex, which is part of the ERAD-C pathway responsible for the rapid degradation of membrane proteins with misfolded cytoplasmic domains.</text>
</comment>
<comment type="catalytic activity">
    <reaction evidence="3">
        <text>S-ubiquitinyl-[E1 ubiquitin-activating enzyme]-L-cysteine + [E2 ubiquitin-conjugating enzyme]-L-cysteine = [E1 ubiquitin-activating enzyme]-L-cysteine + S-ubiquitinyl-[E2 ubiquitin-conjugating enzyme]-L-cysteine.</text>
        <dbReference type="EC" id="2.3.2.23"/>
    </reaction>
</comment>
<comment type="pathway">
    <text evidence="3">Protein modification; protein ubiquitination.</text>
</comment>
<comment type="subcellular location">
    <subcellularLocation>
        <location evidence="1">Endoplasmic reticulum membrane</location>
    </subcellularLocation>
</comment>
<comment type="similarity">
    <text evidence="3">Belongs to the ubiquitin-conjugating enzyme family.</text>
</comment>
<proteinExistence type="evidence at transcript level"/>
<feature type="chain" id="PRO_0000082551" description="Ubiquitin-conjugating enzyme E2 6">
    <location>
        <begin position="1"/>
        <end position="227"/>
    </location>
</feature>
<feature type="topological domain" description="Cytoplasmic" evidence="2">
    <location>
        <begin position="1"/>
        <end position="206"/>
    </location>
</feature>
<feature type="transmembrane region" description="Helical" evidence="2">
    <location>
        <begin position="207"/>
        <end position="225"/>
    </location>
</feature>
<feature type="domain" description="UBC core" evidence="3">
    <location>
        <begin position="5"/>
        <end position="163"/>
    </location>
</feature>
<feature type="active site" description="Glycyl thioester intermediate" evidence="3">
    <location>
        <position position="87"/>
    </location>
</feature>
<feature type="sequence conflict" description="In Ref. 2; BAA13909." evidence="4" ref="2">
    <original>V</original>
    <variation>F</variation>
    <location>
        <position position="22"/>
    </location>
</feature>
<gene>
    <name type="primary">ubc6</name>
    <name type="ORF">SPAC10F6.05c</name>
</gene>
<organism>
    <name type="scientific">Schizosaccharomyces pombe (strain 972 / ATCC 24843)</name>
    <name type="common">Fission yeast</name>
    <dbReference type="NCBI Taxonomy" id="284812"/>
    <lineage>
        <taxon>Eukaryota</taxon>
        <taxon>Fungi</taxon>
        <taxon>Dikarya</taxon>
        <taxon>Ascomycota</taxon>
        <taxon>Taphrinomycotina</taxon>
        <taxon>Schizosaccharomycetes</taxon>
        <taxon>Schizosaccharomycetales</taxon>
        <taxon>Schizosaccharomycetaceae</taxon>
        <taxon>Schizosaccharomyces</taxon>
    </lineage>
</organism>
<keyword id="KW-0067">ATP-binding</keyword>
<keyword id="KW-0256">Endoplasmic reticulum</keyword>
<keyword id="KW-0472">Membrane</keyword>
<keyword id="KW-0547">Nucleotide-binding</keyword>
<keyword id="KW-1185">Reference proteome</keyword>
<keyword id="KW-0808">Transferase</keyword>
<keyword id="KW-0812">Transmembrane</keyword>
<keyword id="KW-1133">Transmembrane helix</keyword>
<keyword id="KW-0833">Ubl conjugation pathway</keyword>
<accession>O42646</accession>
<accession>P78897</accession>
<accession>Q1L844</accession>
<sequence>MASKGAYKRLMKEYLALQKNPVELVDAKPATENILEWHYIITGPPDTPYEGGQYHGTLIFPPDYPFKPPAIRMITPSGRFQTNTRLCLSFSDFHPKSWNPSWMVSTILVGLVSFMTSDEITTGGIVTSESTRRTYAKDTKRFNIMDNPKFLIMFPELIDKNREDIAKAAAEAALIEPQQIHSTPVSSNECKKNEPFNSKQSWVKSRWSIAVLVFFALALARFFGADS</sequence>